<comment type="function">
    <text evidence="3 4 5 6">Acts as a hyperosmolarity-gated non-selective cation channel that permeates Ca(2+) ions (PubMed:25162526, PubMed:30190597). Shows the following permeability sequence: K(+) &gt; Ba(2+) = Ca(2+) &gt; Na(+) = Mg(2+) = Cs(+) (PubMed:25162526). Mechanosensitive ion channel that converts mechanical stimuli into a flow of ions: activated in response to membrane stretch and poke (PubMed:30382938, PubMed:30190597, PubMed:39209849).</text>
</comment>
<comment type="activity regulation">
    <text evidence="4 6">Activated by mechanical pressure.</text>
</comment>
<comment type="subunit">
    <text evidence="4 6">Homodimer.</text>
</comment>
<comment type="subcellular location">
    <subcellularLocation>
        <location evidence="3">Cell membrane</location>
        <topology evidence="1">Multi-pass membrane protein</topology>
    </subcellularLocation>
</comment>
<comment type="tissue specificity">
    <text evidence="3">Expressed in leaves, flowers, roots and guard cells.</text>
</comment>
<comment type="disruption phenotype">
    <text evidence="3">Impaired osmotic Ca(2+) signaling in guard cells and root cells, and attenuated water transpiration regulation and root growth in response to osmotic stress.</text>
</comment>
<comment type="similarity">
    <text evidence="8">Belongs to the CSC1 (TC 1.A.17) family.</text>
</comment>
<organism>
    <name type="scientific">Arabidopsis thaliana</name>
    <name type="common">Mouse-ear cress</name>
    <dbReference type="NCBI Taxonomy" id="3702"/>
    <lineage>
        <taxon>Eukaryota</taxon>
        <taxon>Viridiplantae</taxon>
        <taxon>Streptophyta</taxon>
        <taxon>Embryophyta</taxon>
        <taxon>Tracheophyta</taxon>
        <taxon>Spermatophyta</taxon>
        <taxon>Magnoliopsida</taxon>
        <taxon>eudicotyledons</taxon>
        <taxon>Gunneridae</taxon>
        <taxon>Pentapetalae</taxon>
        <taxon>rosids</taxon>
        <taxon>malvids</taxon>
        <taxon>Brassicales</taxon>
        <taxon>Brassicaceae</taxon>
        <taxon>Camelineae</taxon>
        <taxon>Arabidopsis</taxon>
    </lineage>
</organism>
<sequence length="772" mass="87607">MATLKDIGVSAGINILTAFIFFIIFAFLRLQPFNDRVYFSKWYLRGLRSSPASGGGFAGRFVNLELRSYLKFLHWMPEALKMPERELIDHAGLDSVVYLRIYWLGLKIFAPIAMLAWAVLVPVNWTNNELELAKHFKNVTSSDIDKLTISNIPEGSNRFWAHIIMAYAFTIWTCYMLMKEYETVANMRLQFLASEGRRPDQFTVLVRNVPPDPDETVSELVEHFFLVNHPDNYLTHQVVCNANKLADLVSKKTKLQNWLDYYQLKYTRNNSQIRPITKLGCLGLCGQKVDAIEHYIAEVDKTSKEIAEERENVVNDQKSVMPASFVSFKTRWAAAVCAQTTQTRNPTEWLTEWAAEPRDIYWPNLAIPYVSLTVRRLVMNVAFFFLTFFFIIPIAFVQSLATIEGIEKVAPFLKVIIEKDFIKSLIQGLLAGIALKLFLIFLPAILMTMSKFEGFTSVSFLERRSASRYYIFNLVNVFLGSVIAGAAFEQLNSFLNQSPNQIPKTIGMAIPMKATFFITYIMVDGWAGVAGEILMLKPLIIYHLKNAFLVKTEKDREEAMNPGSIGFNTGEPQIQLYFLLGLVYAPVTPMLLPFILVFFALAYVVYRHQIINVYNQEYESAAAFWPDVHGRVITALIISQLLLMGLLGTKHAASAAPFLIALPVITIGFHRFCKGRFEPAFVRYPLQEAMMKDTLERAREPNLNLKGYLQDAYIHPVFKGGDNDDDGDMIGKLENEVIIVPTKRQSRRNTPAPSRISGESSPSLAVINGKEV</sequence>
<proteinExistence type="evidence at protein level"/>
<dbReference type="EMBL" id="KJ920356">
    <property type="protein sequence ID" value="AIU34613.1"/>
    <property type="molecule type" value="mRNA"/>
</dbReference>
<dbReference type="EMBL" id="AF069441">
    <property type="protein sequence ID" value="AAD36947.1"/>
    <property type="molecule type" value="Genomic_DNA"/>
</dbReference>
<dbReference type="EMBL" id="AL161500">
    <property type="protein sequence ID" value="CAB77902.1"/>
    <property type="molecule type" value="Genomic_DNA"/>
</dbReference>
<dbReference type="EMBL" id="CP002687">
    <property type="protein sequence ID" value="AEE82380.1"/>
    <property type="molecule type" value="Genomic_DNA"/>
</dbReference>
<dbReference type="EMBL" id="CP002687">
    <property type="protein sequence ID" value="AEE82381.1"/>
    <property type="molecule type" value="Genomic_DNA"/>
</dbReference>
<dbReference type="EMBL" id="CP002687">
    <property type="protein sequence ID" value="AEE82382.1"/>
    <property type="molecule type" value="Genomic_DNA"/>
</dbReference>
<dbReference type="EMBL" id="AY056305">
    <property type="protein sequence ID" value="AAL07154.1"/>
    <property type="molecule type" value="mRNA"/>
</dbReference>
<dbReference type="EMBL" id="AY093209">
    <property type="protein sequence ID" value="AAM13208.1"/>
    <property type="molecule type" value="mRNA"/>
</dbReference>
<dbReference type="PIR" id="H85054">
    <property type="entry name" value="H85054"/>
</dbReference>
<dbReference type="RefSeq" id="NP_192343.1">
    <property type="nucleotide sequence ID" value="NM_116672.4"/>
</dbReference>
<dbReference type="RefSeq" id="NP_849296.1">
    <property type="nucleotide sequence ID" value="NM_178965.2"/>
</dbReference>
<dbReference type="RefSeq" id="NP_849297.1">
    <property type="nucleotide sequence ID" value="NM_178966.1"/>
</dbReference>
<dbReference type="PDB" id="6JPF">
    <property type="method" value="EM"/>
    <property type="resolution" value="3.52 A"/>
    <property type="chains" value="A/B=1-772"/>
</dbReference>
<dbReference type="PDB" id="8GRN">
    <property type="method" value="EM"/>
    <property type="resolution" value="2.50 A"/>
    <property type="chains" value="A/B=1-772"/>
</dbReference>
<dbReference type="PDB" id="8YMM">
    <property type="method" value="EM"/>
    <property type="resolution" value="2.80 A"/>
    <property type="chains" value="A/B=1-772"/>
</dbReference>
<dbReference type="PDB" id="8YMN">
    <property type="method" value="EM"/>
    <property type="resolution" value="2.50 A"/>
    <property type="chains" value="A/B=1-772"/>
</dbReference>
<dbReference type="PDB" id="8YMO">
    <property type="method" value="EM"/>
    <property type="resolution" value="2.70 A"/>
    <property type="chains" value="A/C=1-772"/>
</dbReference>
<dbReference type="PDB" id="8YMP">
    <property type="method" value="EM"/>
    <property type="resolution" value="2.60 A"/>
    <property type="chains" value="A/B=1-772"/>
</dbReference>
<dbReference type="PDB" id="8YMQ">
    <property type="method" value="EM"/>
    <property type="resolution" value="2.60 A"/>
    <property type="chains" value="A/B=1-772"/>
</dbReference>
<dbReference type="PDBsum" id="6JPF"/>
<dbReference type="PDBsum" id="8GRN"/>
<dbReference type="PDBsum" id="8YMM"/>
<dbReference type="PDBsum" id="8YMN"/>
<dbReference type="PDBsum" id="8YMO"/>
<dbReference type="PDBsum" id="8YMP"/>
<dbReference type="PDBsum" id="8YMQ"/>
<dbReference type="EMDB" id="EMD-34209"/>
<dbReference type="EMDB" id="EMD-39399"/>
<dbReference type="EMDB" id="EMD-39400"/>
<dbReference type="EMDB" id="EMD-39401"/>
<dbReference type="EMDB" id="EMD-39402"/>
<dbReference type="EMDB" id="EMD-39403"/>
<dbReference type="EMDB" id="EMD-6822"/>
<dbReference type="SMR" id="Q9XEA1"/>
<dbReference type="FunCoup" id="Q9XEA1">
    <property type="interactions" value="785"/>
</dbReference>
<dbReference type="STRING" id="3702.Q9XEA1"/>
<dbReference type="TCDB" id="1.A.17.5.19">
    <property type="family name" value="the calcium-dependent chloride channel (ca-clc) family"/>
</dbReference>
<dbReference type="GlyCosmos" id="Q9XEA1">
    <property type="glycosylation" value="1 site, No reported glycans"/>
</dbReference>
<dbReference type="GlyGen" id="Q9XEA1">
    <property type="glycosylation" value="1 site"/>
</dbReference>
<dbReference type="iPTMnet" id="Q9XEA1"/>
<dbReference type="PaxDb" id="3702-AT4G04340.3"/>
<dbReference type="ProteomicsDB" id="220348"/>
<dbReference type="EnsemblPlants" id="AT4G04340.1">
    <property type="protein sequence ID" value="AT4G04340.1"/>
    <property type="gene ID" value="AT4G04340"/>
</dbReference>
<dbReference type="EnsemblPlants" id="AT4G04340.2">
    <property type="protein sequence ID" value="AT4G04340.2"/>
    <property type="gene ID" value="AT4G04340"/>
</dbReference>
<dbReference type="EnsemblPlants" id="AT4G04340.3">
    <property type="protein sequence ID" value="AT4G04340.3"/>
    <property type="gene ID" value="AT4G04340"/>
</dbReference>
<dbReference type="GeneID" id="825754"/>
<dbReference type="Gramene" id="AT4G04340.1">
    <property type="protein sequence ID" value="AT4G04340.1"/>
    <property type="gene ID" value="AT4G04340"/>
</dbReference>
<dbReference type="Gramene" id="AT4G04340.2">
    <property type="protein sequence ID" value="AT4G04340.2"/>
    <property type="gene ID" value="AT4G04340"/>
</dbReference>
<dbReference type="Gramene" id="AT4G04340.3">
    <property type="protein sequence ID" value="AT4G04340.3"/>
    <property type="gene ID" value="AT4G04340"/>
</dbReference>
<dbReference type="KEGG" id="ath:AT4G04340"/>
<dbReference type="Araport" id="AT4G04340"/>
<dbReference type="TAIR" id="AT4G04340">
    <property type="gene designation" value="OSCA1"/>
</dbReference>
<dbReference type="eggNOG" id="KOG1134">
    <property type="taxonomic scope" value="Eukaryota"/>
</dbReference>
<dbReference type="HOGENOM" id="CLU_002458_7_1_1"/>
<dbReference type="InParanoid" id="Q9XEA1"/>
<dbReference type="OMA" id="WTNNELE"/>
<dbReference type="PhylomeDB" id="Q9XEA1"/>
<dbReference type="PRO" id="PR:Q9XEA1"/>
<dbReference type="Proteomes" id="UP000006548">
    <property type="component" value="Chromosome 4"/>
</dbReference>
<dbReference type="ExpressionAtlas" id="Q9XEA1">
    <property type="expression patterns" value="baseline and differential"/>
</dbReference>
<dbReference type="GO" id="GO:0005829">
    <property type="term" value="C:cytosol"/>
    <property type="evidence" value="ECO:0007005"/>
    <property type="project" value="TAIR"/>
</dbReference>
<dbReference type="GO" id="GO:0005886">
    <property type="term" value="C:plasma membrane"/>
    <property type="evidence" value="ECO:0000314"/>
    <property type="project" value="UniProtKB"/>
</dbReference>
<dbReference type="GO" id="GO:0005227">
    <property type="term" value="F:calcium-activated cation channel activity"/>
    <property type="evidence" value="ECO:0000314"/>
    <property type="project" value="UniProtKB"/>
</dbReference>
<dbReference type="GO" id="GO:0008381">
    <property type="term" value="F:mechanosensitive monoatomic ion channel activity"/>
    <property type="evidence" value="ECO:0000314"/>
    <property type="project" value="UniProtKB"/>
</dbReference>
<dbReference type="GO" id="GO:0005261">
    <property type="term" value="F:monoatomic cation channel activity"/>
    <property type="evidence" value="ECO:0000314"/>
    <property type="project" value="TAIR"/>
</dbReference>
<dbReference type="GO" id="GO:0071474">
    <property type="term" value="P:cellular hyperosmotic response"/>
    <property type="evidence" value="ECO:0000314"/>
    <property type="project" value="UniProtKB"/>
</dbReference>
<dbReference type="GO" id="GO:0051262">
    <property type="term" value="P:protein tetramerization"/>
    <property type="evidence" value="ECO:0000304"/>
    <property type="project" value="UniProtKB"/>
</dbReference>
<dbReference type="GO" id="GO:0090279">
    <property type="term" value="P:regulation of calcium ion import"/>
    <property type="evidence" value="ECO:0000314"/>
    <property type="project" value="UniProtKB"/>
</dbReference>
<dbReference type="GO" id="GO:0006970">
    <property type="term" value="P:response to osmotic stress"/>
    <property type="evidence" value="ECO:0000315"/>
    <property type="project" value="TAIR"/>
</dbReference>
<dbReference type="InterPro" id="IPR045122">
    <property type="entry name" value="Csc1-like"/>
</dbReference>
<dbReference type="InterPro" id="IPR003864">
    <property type="entry name" value="CSC1/OSCA1-like_7TM"/>
</dbReference>
<dbReference type="InterPro" id="IPR027815">
    <property type="entry name" value="CSC1/OSCA1-like_cyt"/>
</dbReference>
<dbReference type="InterPro" id="IPR032880">
    <property type="entry name" value="Csc1/OSCA1-like_N"/>
</dbReference>
<dbReference type="PANTHER" id="PTHR13018">
    <property type="entry name" value="PROBABLE MEMBRANE PROTEIN DUF221-RELATED"/>
    <property type="match status" value="1"/>
</dbReference>
<dbReference type="PANTHER" id="PTHR13018:SF93">
    <property type="entry name" value="PROTEIN OSCA1"/>
    <property type="match status" value="1"/>
</dbReference>
<dbReference type="Pfam" id="PF14703">
    <property type="entry name" value="PHM7_cyt"/>
    <property type="match status" value="1"/>
</dbReference>
<dbReference type="Pfam" id="PF02714">
    <property type="entry name" value="RSN1_7TM"/>
    <property type="match status" value="1"/>
</dbReference>
<dbReference type="Pfam" id="PF13967">
    <property type="entry name" value="RSN1_TM"/>
    <property type="match status" value="1"/>
</dbReference>
<evidence type="ECO:0000255" key="1"/>
<evidence type="ECO:0000256" key="2">
    <source>
        <dbReference type="SAM" id="MobiDB-lite"/>
    </source>
</evidence>
<evidence type="ECO:0000269" key="3">
    <source>
    </source>
</evidence>
<evidence type="ECO:0000269" key="4">
    <source>
    </source>
</evidence>
<evidence type="ECO:0000269" key="5">
    <source>
    </source>
</evidence>
<evidence type="ECO:0000269" key="6">
    <source>
    </source>
</evidence>
<evidence type="ECO:0000303" key="7">
    <source>
    </source>
</evidence>
<evidence type="ECO:0000305" key="8"/>
<evidence type="ECO:0000305" key="9">
    <source>
    </source>
</evidence>
<evidence type="ECO:0000312" key="10">
    <source>
        <dbReference type="Araport" id="AT4G04340"/>
    </source>
</evidence>
<evidence type="ECO:0000312" key="11">
    <source>
        <dbReference type="EMBL" id="AAD36947.1"/>
    </source>
</evidence>
<evidence type="ECO:0007744" key="12">
    <source>
        <dbReference type="PDB" id="6JPF"/>
    </source>
</evidence>
<evidence type="ECO:0007744" key="13">
    <source>
        <dbReference type="PDB" id="8GRN"/>
    </source>
</evidence>
<evidence type="ECO:0007744" key="14">
    <source>
        <dbReference type="PDB" id="8YMM"/>
    </source>
</evidence>
<evidence type="ECO:0007744" key="15">
    <source>
        <dbReference type="PDB" id="8YMN"/>
    </source>
</evidence>
<evidence type="ECO:0007744" key="16">
    <source>
        <dbReference type="PDB" id="8YMO"/>
    </source>
</evidence>
<evidence type="ECO:0007744" key="17">
    <source>
        <dbReference type="PDB" id="8YMP"/>
    </source>
</evidence>
<evidence type="ECO:0007744" key="18">
    <source>
        <dbReference type="PDB" id="8YMQ"/>
    </source>
</evidence>
<evidence type="ECO:0007829" key="19">
    <source>
        <dbReference type="PDB" id="8GRN"/>
    </source>
</evidence>
<protein>
    <recommendedName>
        <fullName evidence="7">Hyperosmolality-gated Ca2+ permeable channel 1.1</fullName>
        <shortName evidence="7">AtOSCA1.1</shortName>
    </recommendedName>
    <alternativeName>
        <fullName evidence="8">CSC1-like protein At4g04340</fullName>
    </alternativeName>
    <alternativeName>
        <fullName evidence="7">Protein reduced hyperosmolality-induced [Ca(2+)]i increase 1</fullName>
    </alternativeName>
</protein>
<accession>Q9XEA1</accession>
<accession>A0A097NUN6</accession>
<accession>Q93ZR7</accession>
<name>OSC11_ARATH</name>
<reference key="1">
    <citation type="journal article" date="2014" name="Nature">
        <title>OSCA1 mediates osmotic-stress-evoked Ca(2+) increases vital for osmosensing in Arabidopsis.</title>
        <authorList>
            <person name="Yuan F."/>
            <person name="Yang H."/>
            <person name="Xue Y."/>
            <person name="Kong D."/>
            <person name="Ye R."/>
            <person name="Li C."/>
            <person name="Zhang J."/>
            <person name="Theprungsirikul L."/>
            <person name="Shrift T."/>
            <person name="Krichilsky B."/>
            <person name="Johnson D.M."/>
            <person name="Swift G.B."/>
            <person name="He Y."/>
            <person name="Siedow J.N."/>
            <person name="Pei Z.M."/>
        </authorList>
    </citation>
    <scope>NUCLEOTIDE SEQUENCE [MRNA]</scope>
    <scope>FUNCTION</scope>
    <scope>SUBCELLULAR LOCATION</scope>
    <scope>TISSUE SPECIFICITY</scope>
    <scope>MUTAGENESIS OF GLY-59 AND GLY-507</scope>
    <scope>DISRUPTION PHENOTYPE</scope>
</reference>
<reference key="2">
    <citation type="journal article" date="1999" name="Nature">
        <title>Sequence and analysis of chromosome 4 of the plant Arabidopsis thaliana.</title>
        <authorList>
            <person name="Mayer K.F.X."/>
            <person name="Schueller C."/>
            <person name="Wambutt R."/>
            <person name="Murphy G."/>
            <person name="Volckaert G."/>
            <person name="Pohl T."/>
            <person name="Duesterhoeft A."/>
            <person name="Stiekema W."/>
            <person name="Entian K.-D."/>
            <person name="Terryn N."/>
            <person name="Harris B."/>
            <person name="Ansorge W."/>
            <person name="Brandt P."/>
            <person name="Grivell L.A."/>
            <person name="Rieger M."/>
            <person name="Weichselgartner M."/>
            <person name="de Simone V."/>
            <person name="Obermaier B."/>
            <person name="Mache R."/>
            <person name="Mueller M."/>
            <person name="Kreis M."/>
            <person name="Delseny M."/>
            <person name="Puigdomenech P."/>
            <person name="Watson M."/>
            <person name="Schmidtheini T."/>
            <person name="Reichert B."/>
            <person name="Portetelle D."/>
            <person name="Perez-Alonso M."/>
            <person name="Boutry M."/>
            <person name="Bancroft I."/>
            <person name="Vos P."/>
            <person name="Hoheisel J."/>
            <person name="Zimmermann W."/>
            <person name="Wedler H."/>
            <person name="Ridley P."/>
            <person name="Langham S.-A."/>
            <person name="McCullagh B."/>
            <person name="Bilham L."/>
            <person name="Robben J."/>
            <person name="van der Schueren J."/>
            <person name="Grymonprez B."/>
            <person name="Chuang Y.-J."/>
            <person name="Vandenbussche F."/>
            <person name="Braeken M."/>
            <person name="Weltjens I."/>
            <person name="Voet M."/>
            <person name="Bastiaens I."/>
            <person name="Aert R."/>
            <person name="Defoor E."/>
            <person name="Weitzenegger T."/>
            <person name="Bothe G."/>
            <person name="Ramsperger U."/>
            <person name="Hilbert H."/>
            <person name="Braun M."/>
            <person name="Holzer E."/>
            <person name="Brandt A."/>
            <person name="Peters S."/>
            <person name="van Staveren M."/>
            <person name="Dirkse W."/>
            <person name="Mooijman P."/>
            <person name="Klein Lankhorst R."/>
            <person name="Rose M."/>
            <person name="Hauf J."/>
            <person name="Koetter P."/>
            <person name="Berneiser S."/>
            <person name="Hempel S."/>
            <person name="Feldpausch M."/>
            <person name="Lamberth S."/>
            <person name="Van den Daele H."/>
            <person name="De Keyser A."/>
            <person name="Buysshaert C."/>
            <person name="Gielen J."/>
            <person name="Villarroel R."/>
            <person name="De Clercq R."/>
            <person name="van Montagu M."/>
            <person name="Rogers J."/>
            <person name="Cronin A."/>
            <person name="Quail M.A."/>
            <person name="Bray-Allen S."/>
            <person name="Clark L."/>
            <person name="Doggett J."/>
            <person name="Hall S."/>
            <person name="Kay M."/>
            <person name="Lennard N."/>
            <person name="McLay K."/>
            <person name="Mayes R."/>
            <person name="Pettett A."/>
            <person name="Rajandream M.A."/>
            <person name="Lyne M."/>
            <person name="Benes V."/>
            <person name="Rechmann S."/>
            <person name="Borkova D."/>
            <person name="Bloecker H."/>
            <person name="Scharfe M."/>
            <person name="Grimm M."/>
            <person name="Loehnert T.-H."/>
            <person name="Dose S."/>
            <person name="de Haan M."/>
            <person name="Maarse A.C."/>
            <person name="Schaefer M."/>
            <person name="Mueller-Auer S."/>
            <person name="Gabel C."/>
            <person name="Fuchs M."/>
            <person name="Fartmann B."/>
            <person name="Granderath K."/>
            <person name="Dauner D."/>
            <person name="Herzl A."/>
            <person name="Neumann S."/>
            <person name="Argiriou A."/>
            <person name="Vitale D."/>
            <person name="Liguori R."/>
            <person name="Piravandi E."/>
            <person name="Massenet O."/>
            <person name="Quigley F."/>
            <person name="Clabauld G."/>
            <person name="Muendlein A."/>
            <person name="Felber R."/>
            <person name="Schnabl S."/>
            <person name="Hiller R."/>
            <person name="Schmidt W."/>
            <person name="Lecharny A."/>
            <person name="Aubourg S."/>
            <person name="Chefdor F."/>
            <person name="Cooke R."/>
            <person name="Berger C."/>
            <person name="Monfort A."/>
            <person name="Casacuberta E."/>
            <person name="Gibbons T."/>
            <person name="Weber N."/>
            <person name="Vandenbol M."/>
            <person name="Bargues M."/>
            <person name="Terol J."/>
            <person name="Torres A."/>
            <person name="Perez-Perez A."/>
            <person name="Purnelle B."/>
            <person name="Bent E."/>
            <person name="Johnson S."/>
            <person name="Tacon D."/>
            <person name="Jesse T."/>
            <person name="Heijnen L."/>
            <person name="Schwarz S."/>
            <person name="Scholler P."/>
            <person name="Heber S."/>
            <person name="Francs P."/>
            <person name="Bielke C."/>
            <person name="Frishman D."/>
            <person name="Haase D."/>
            <person name="Lemcke K."/>
            <person name="Mewes H.-W."/>
            <person name="Stocker S."/>
            <person name="Zaccaria P."/>
            <person name="Bevan M."/>
            <person name="Wilson R.K."/>
            <person name="de la Bastide M."/>
            <person name="Habermann K."/>
            <person name="Parnell L."/>
            <person name="Dedhia N."/>
            <person name="Gnoj L."/>
            <person name="Schutz K."/>
            <person name="Huang E."/>
            <person name="Spiegel L."/>
            <person name="Sekhon M."/>
            <person name="Murray J."/>
            <person name="Sheet P."/>
            <person name="Cordes M."/>
            <person name="Abu-Threideh J."/>
            <person name="Stoneking T."/>
            <person name="Kalicki J."/>
            <person name="Graves T."/>
            <person name="Harmon G."/>
            <person name="Edwards J."/>
            <person name="Latreille P."/>
            <person name="Courtney L."/>
            <person name="Cloud J."/>
            <person name="Abbott A."/>
            <person name="Scott K."/>
            <person name="Johnson D."/>
            <person name="Minx P."/>
            <person name="Bentley D."/>
            <person name="Fulton B."/>
            <person name="Miller N."/>
            <person name="Greco T."/>
            <person name="Kemp K."/>
            <person name="Kramer J."/>
            <person name="Fulton L."/>
            <person name="Mardis E."/>
            <person name="Dante M."/>
            <person name="Pepin K."/>
            <person name="Hillier L.W."/>
            <person name="Nelson J."/>
            <person name="Spieth J."/>
            <person name="Ryan E."/>
            <person name="Andrews S."/>
            <person name="Geisel C."/>
            <person name="Layman D."/>
            <person name="Du H."/>
            <person name="Ali J."/>
            <person name="Berghoff A."/>
            <person name="Jones K."/>
            <person name="Drone K."/>
            <person name="Cotton M."/>
            <person name="Joshu C."/>
            <person name="Antonoiu B."/>
            <person name="Zidanic M."/>
            <person name="Strong C."/>
            <person name="Sun H."/>
            <person name="Lamar B."/>
            <person name="Yordan C."/>
            <person name="Ma P."/>
            <person name="Zhong J."/>
            <person name="Preston R."/>
            <person name="Vil D."/>
            <person name="Shekher M."/>
            <person name="Matero A."/>
            <person name="Shah R."/>
            <person name="Swaby I.K."/>
            <person name="O'Shaughnessy A."/>
            <person name="Rodriguez M."/>
            <person name="Hoffman J."/>
            <person name="Till S."/>
            <person name="Granat S."/>
            <person name="Shohdy N."/>
            <person name="Hasegawa A."/>
            <person name="Hameed A."/>
            <person name="Lodhi M."/>
            <person name="Johnson A."/>
            <person name="Chen E."/>
            <person name="Marra M.A."/>
            <person name="Martienssen R."/>
            <person name="McCombie W.R."/>
        </authorList>
    </citation>
    <scope>NUCLEOTIDE SEQUENCE [LARGE SCALE GENOMIC DNA]</scope>
    <source>
        <strain>cv. Columbia</strain>
    </source>
</reference>
<reference key="3">
    <citation type="journal article" date="2017" name="Plant J.">
        <title>Araport11: a complete reannotation of the Arabidopsis thaliana reference genome.</title>
        <authorList>
            <person name="Cheng C.Y."/>
            <person name="Krishnakumar V."/>
            <person name="Chan A.P."/>
            <person name="Thibaud-Nissen F."/>
            <person name="Schobel S."/>
            <person name="Town C.D."/>
        </authorList>
    </citation>
    <scope>GENOME REANNOTATION</scope>
    <source>
        <strain>cv. Columbia</strain>
    </source>
</reference>
<reference key="4">
    <citation type="journal article" date="2003" name="Science">
        <title>Empirical analysis of transcriptional activity in the Arabidopsis genome.</title>
        <authorList>
            <person name="Yamada K."/>
            <person name="Lim J."/>
            <person name="Dale J.M."/>
            <person name="Chen H."/>
            <person name="Shinn P."/>
            <person name="Palm C.J."/>
            <person name="Southwick A.M."/>
            <person name="Wu H.C."/>
            <person name="Kim C.J."/>
            <person name="Nguyen M."/>
            <person name="Pham P.K."/>
            <person name="Cheuk R.F."/>
            <person name="Karlin-Newmann G."/>
            <person name="Liu S.X."/>
            <person name="Lam B."/>
            <person name="Sakano H."/>
            <person name="Wu T."/>
            <person name="Yu G."/>
            <person name="Miranda M."/>
            <person name="Quach H.L."/>
            <person name="Tripp M."/>
            <person name="Chang C.H."/>
            <person name="Lee J.M."/>
            <person name="Toriumi M.J."/>
            <person name="Chan M.M."/>
            <person name="Tang C.C."/>
            <person name="Onodera C.S."/>
            <person name="Deng J.M."/>
            <person name="Akiyama K."/>
            <person name="Ansari Y."/>
            <person name="Arakawa T."/>
            <person name="Banh J."/>
            <person name="Banno F."/>
            <person name="Bowser L."/>
            <person name="Brooks S.Y."/>
            <person name="Carninci P."/>
            <person name="Chao Q."/>
            <person name="Choy N."/>
            <person name="Enju A."/>
            <person name="Goldsmith A.D."/>
            <person name="Gurjal M."/>
            <person name="Hansen N.F."/>
            <person name="Hayashizaki Y."/>
            <person name="Johnson-Hopson C."/>
            <person name="Hsuan V.W."/>
            <person name="Iida K."/>
            <person name="Karnes M."/>
            <person name="Khan S."/>
            <person name="Koesema E."/>
            <person name="Ishida J."/>
            <person name="Jiang P.X."/>
            <person name="Jones T."/>
            <person name="Kawai J."/>
            <person name="Kamiya A."/>
            <person name="Meyers C."/>
            <person name="Nakajima M."/>
            <person name="Narusaka M."/>
            <person name="Seki M."/>
            <person name="Sakurai T."/>
            <person name="Satou M."/>
            <person name="Tamse R."/>
            <person name="Vaysberg M."/>
            <person name="Wallender E.K."/>
            <person name="Wong C."/>
            <person name="Yamamura Y."/>
            <person name="Yuan S."/>
            <person name="Shinozaki K."/>
            <person name="Davis R.W."/>
            <person name="Theologis A."/>
            <person name="Ecker J.R."/>
        </authorList>
    </citation>
    <scope>NUCLEOTIDE SEQUENCE [LARGE SCALE MRNA]</scope>
    <source>
        <strain>cv. Columbia</strain>
    </source>
</reference>
<reference key="5">
    <citation type="journal article" date="2009" name="Plant Physiol.">
        <title>Large-scale Arabidopsis phosphoproteome profiling reveals novel chloroplast kinase substrates and phosphorylation networks.</title>
        <authorList>
            <person name="Reiland S."/>
            <person name="Messerli G."/>
            <person name="Baerenfaller K."/>
            <person name="Gerrits B."/>
            <person name="Endler A."/>
            <person name="Grossmann J."/>
            <person name="Gruissem W."/>
            <person name="Baginsky S."/>
        </authorList>
    </citation>
    <scope>IDENTIFICATION BY MASS SPECTROMETRY [LARGE SCALE ANALYSIS]</scope>
</reference>
<reference key="6">
    <citation type="journal article" date="2014" name="Cell Res.">
        <title>DUF221 proteins are a family of osmosensitive calcium-permeable cation channels conserved across eukaryotes.</title>
        <authorList>
            <person name="Hou C."/>
            <person name="Tian W."/>
            <person name="Kleist T."/>
            <person name="He K."/>
            <person name="Garcia V."/>
            <person name="Bai F."/>
            <person name="Hao Y."/>
            <person name="Luan S."/>
            <person name="Li L."/>
        </authorList>
    </citation>
    <scope>GENE FAMILY</scope>
</reference>
<reference key="7">
    <citation type="journal article" date="2018" name="Elife">
        <title>OSCA/TMEM63 are an Evolutionarily Conserved Family of Mechanically Activated Ion Channels.</title>
        <authorList>
            <person name="Murthy S.E."/>
            <person name="Dubin A.E."/>
            <person name="Whitwam T."/>
            <person name="Jojoa-Cruz S."/>
            <person name="Cahalan S.M."/>
            <person name="Mousavi S.A.R."/>
            <person name="Ward A.B."/>
            <person name="Patapoutian A."/>
        </authorList>
    </citation>
    <scope>FUNCTION</scope>
</reference>
<reference evidence="12" key="8">
    <citation type="journal article" date="2018" name="Nat. Struct. Mol. Biol.">
        <title>Structure of the mechanosensitive OSCA channels.</title>
        <authorList>
            <person name="Zhang M."/>
            <person name="Wang D."/>
            <person name="Kang Y."/>
            <person name="Wu J.X."/>
            <person name="Yao F."/>
            <person name="Pan C."/>
            <person name="Yan Z."/>
            <person name="Song C."/>
            <person name="Chen L."/>
        </authorList>
    </citation>
    <scope>STRUCTURE BY ELECTRON MICROSCOPY (3.50 ANGSTROMS)</scope>
    <scope>FUNCTION</scope>
    <scope>HOMODIMERIZATION</scope>
    <scope>TOPOLOGY</scope>
    <scope>ACTIVITY REGULATION</scope>
    <scope>GLYCOSYLATION AT ASN-138</scope>
    <scope>MUTAGENESIS OF ASN-124; ASN-138; GLN-339; THR-340 AND GLU-688</scope>
</reference>
<reference evidence="13" key="9">
    <citation type="journal article" date="2023" name="Nat. Commun.">
        <title>A mechanical-coupling mechanism in OSCA/TMEM63 channel mechanosensitivity.</title>
        <authorList>
            <person name="Zhang M."/>
            <person name="Shan Y."/>
            <person name="Cox C.D."/>
            <person name="Pei D."/>
        </authorList>
    </citation>
    <scope>STRUCTURE BY ELECTRON MICROSCOPY (2.50 ANGSTROMS)</scope>
</reference>
<reference evidence="14 15 16 17 18" key="10">
    <citation type="journal article" date="2024" name="Nat. Commun.">
        <title>Activation mechanisms of dimeric mechanosensitive OSCA/TMEM63 channels.</title>
        <authorList>
            <person name="Shan Y."/>
            <person name="Zhang M."/>
            <person name="Chen M."/>
            <person name="Guo X."/>
            <person name="Li Y."/>
            <person name="Zhang M."/>
            <person name="Pei D."/>
        </authorList>
    </citation>
    <scope>STRUCTURE BY ELECTRON MICROSCOPY (2.50 ANGSTROMS)</scope>
    <scope>FUNCTION</scope>
    <scope>ACTIVITY REGULATION</scope>
    <scope>SUBUNIT</scope>
    <scope>MUTAGENESIS OF PHE-516</scope>
</reference>
<keyword id="KW-0002">3D-structure</keyword>
<keyword id="KW-0106">Calcium</keyword>
<keyword id="KW-1003">Cell membrane</keyword>
<keyword id="KW-0325">Glycoprotein</keyword>
<keyword id="KW-0407">Ion channel</keyword>
<keyword id="KW-0406">Ion transport</keyword>
<keyword id="KW-0472">Membrane</keyword>
<keyword id="KW-1185">Reference proteome</keyword>
<keyword id="KW-0812">Transmembrane</keyword>
<keyword id="KW-1133">Transmembrane helix</keyword>
<keyword id="KW-0813">Transport</keyword>
<feature type="chain" id="PRO_0000429803" description="Hyperosmolality-gated Ca2+ permeable channel 1.1">
    <location>
        <begin position="1"/>
        <end position="772"/>
    </location>
</feature>
<feature type="topological domain" description="Extracellular" evidence="6 9 12">
    <location>
        <begin position="1"/>
        <end position="5"/>
    </location>
</feature>
<feature type="transmembrane region" description="Helical; Name=TM0" evidence="4 6 12">
    <location>
        <begin position="6"/>
        <end position="28"/>
    </location>
</feature>
<feature type="topological domain" description="Cytoplasmic" evidence="6 9">
    <location>
        <begin position="29"/>
        <end position="100"/>
    </location>
</feature>
<feature type="transmembrane region" description="Helical; Name=TM1" evidence="4 6 12">
    <location>
        <begin position="101"/>
        <end position="122"/>
    </location>
</feature>
<feature type="topological domain" description="Extracellular" evidence="6 9">
    <location>
        <begin position="123"/>
        <end position="159"/>
    </location>
</feature>
<feature type="transmembrane region" description="Helical; Name=TM2" evidence="4 6 12">
    <location>
        <begin position="160"/>
        <end position="180"/>
    </location>
</feature>
<feature type="topological domain" description="Cytoplasmic" evidence="6 9">
    <location>
        <begin position="181"/>
        <end position="372"/>
    </location>
</feature>
<feature type="transmembrane region" description="Helical; Name=TM3" evidence="4 6 12">
    <location>
        <begin position="373"/>
        <end position="398"/>
    </location>
</feature>
<feature type="topological domain" description="Extracellular" evidence="6 9">
    <location>
        <begin position="399"/>
        <end position="424"/>
    </location>
</feature>
<feature type="transmembrane region" description="Helical; Name=TM4" evidence="4 6 12">
    <location>
        <begin position="425"/>
        <end position="450"/>
    </location>
</feature>
<feature type="topological domain" description="Cytoplasmic" evidence="6 9">
    <location>
        <begin position="451"/>
        <end position="461"/>
    </location>
</feature>
<feature type="transmembrane region" description="Helical; Name=TM5" evidence="4 6 12">
    <location>
        <begin position="462"/>
        <end position="485"/>
    </location>
</feature>
<feature type="topological domain" description="Extracellular" evidence="6 9">
    <location>
        <begin position="486"/>
        <end position="509"/>
    </location>
</feature>
<feature type="transmembrane region" description="Helical; Name=TM6" evidence="4 6 12">
    <location>
        <begin position="510"/>
        <end position="538"/>
    </location>
</feature>
<feature type="topological domain" description="Cytoplasmic" evidence="6 9">
    <location>
        <begin position="539"/>
        <end position="566"/>
    </location>
</feature>
<feature type="transmembrane region" description="Helical; Name=TM7" evidence="4 6 12">
    <location>
        <begin position="567"/>
        <end position="587"/>
    </location>
</feature>
<feature type="topological domain" description="Extracellular" evidence="6 9">
    <location>
        <position position="588"/>
    </location>
</feature>
<feature type="transmembrane region" description="Helical; Name=TM8" evidence="4 6 12">
    <location>
        <begin position="589"/>
        <end position="606"/>
    </location>
</feature>
<feature type="topological domain" description="Cytoplasmic" evidence="6 9">
    <location>
        <begin position="607"/>
        <end position="624"/>
    </location>
</feature>
<feature type="transmembrane region" description="Helical; Name=TM9" evidence="4 6 12">
    <location>
        <begin position="625"/>
        <end position="647"/>
    </location>
</feature>
<feature type="topological domain" description="Extracellular" evidence="6 9">
    <location>
        <begin position="648"/>
        <end position="653"/>
    </location>
</feature>
<feature type="transmembrane region" description="Helical; Name=TM10" evidence="4 6 12">
    <location>
        <begin position="654"/>
        <end position="674"/>
    </location>
</feature>
<feature type="topological domain" description="Cytoplasmic" evidence="6 9">
    <location>
        <begin position="675"/>
        <end position="772"/>
    </location>
</feature>
<feature type="region of interest" description="Cytoplasmic region required for homodimerization" evidence="4">
    <location>
        <begin position="339"/>
        <end position="344"/>
    </location>
</feature>
<feature type="region of interest" description="Cytoplasmic region required for homodimerization" evidence="4">
    <location>
        <begin position="686"/>
        <end position="688"/>
    </location>
</feature>
<feature type="region of interest" description="Disordered" evidence="2">
    <location>
        <begin position="743"/>
        <end position="772"/>
    </location>
</feature>
<feature type="compositionally biased region" description="Polar residues" evidence="2">
    <location>
        <begin position="748"/>
        <end position="763"/>
    </location>
</feature>
<feature type="glycosylation site" description="N-linked (GlcNAc) asparagine" evidence="9">
    <location>
        <position position="138"/>
    </location>
</feature>
<feature type="mutagenesis site" description="In osca1-1; defect in the perception of hyperosmolarity; when associated with D-507." evidence="3">
    <original>G</original>
    <variation>R</variation>
    <location>
        <position position="59"/>
    </location>
</feature>
<feature type="mutagenesis site" description="No effect on the molecular weight of OSCA1 when overexpressed in a heterologous system." evidence="4">
    <original>N</original>
    <variation>Q</variation>
    <location>
        <position position="124"/>
    </location>
</feature>
<feature type="mutagenesis site" description="Decreases the molecular weight of OSCA1 when overexpressed in a heterologous system." evidence="4">
    <original>N</original>
    <variation>Q</variation>
    <location>
        <position position="138"/>
    </location>
</feature>
<feature type="mutagenesis site" description="Slightly prevents the formation of homodimer." evidence="4">
    <original>Q</original>
    <variation>A</variation>
    <location>
        <position position="339"/>
    </location>
</feature>
<feature type="mutagenesis site" description="Prevents the formation of homodimer." evidence="4">
    <original>T</original>
    <variation>A</variation>
    <location>
        <position position="340"/>
    </location>
</feature>
<feature type="mutagenesis site" description="In osca1-1; defect in the perception of hyperosmolarity; when associated with R-59." evidence="3">
    <original>G</original>
    <variation>D</variation>
    <location>
        <position position="507"/>
    </location>
</feature>
<feature type="mutagenesis site" description="Induces a thinner transmembrane tickness. The channel is non-conducting in the native lipid environment, but can be directly activated by lyso-phosphatidylcholine (Lyso-PC) with reduced single-channel conductance." evidence="6">
    <original>F</original>
    <variation>A</variation>
    <location>
        <position position="516"/>
    </location>
</feature>
<feature type="mutagenesis site" description="Prevents the formation of homodimer." evidence="4">
    <original>E</original>
    <variation>A</variation>
    <location>
        <position position="688"/>
    </location>
</feature>
<feature type="sequence conflict" description="In Ref. 4; AAL07154." evidence="8" ref="4">
    <original>I</original>
    <variation>T</variation>
    <location>
        <position position="667"/>
    </location>
</feature>
<feature type="helix" evidence="19">
    <location>
        <begin position="4"/>
        <end position="29"/>
    </location>
</feature>
<feature type="turn" evidence="19">
    <location>
        <begin position="36"/>
        <end position="38"/>
    </location>
</feature>
<feature type="helix" evidence="19">
    <location>
        <begin position="40"/>
        <end position="42"/>
    </location>
</feature>
<feature type="turn" evidence="19">
    <location>
        <begin position="43"/>
        <end position="46"/>
    </location>
</feature>
<feature type="turn" evidence="19">
    <location>
        <begin position="51"/>
        <end position="54"/>
    </location>
</feature>
<feature type="strand" evidence="19">
    <location>
        <begin position="61"/>
        <end position="63"/>
    </location>
</feature>
<feature type="helix" evidence="19">
    <location>
        <begin position="75"/>
        <end position="80"/>
    </location>
</feature>
<feature type="turn" evidence="19">
    <location>
        <begin position="88"/>
        <end position="91"/>
    </location>
</feature>
<feature type="helix" evidence="19">
    <location>
        <begin position="93"/>
        <end position="125"/>
    </location>
</feature>
<feature type="helix" evidence="19">
    <location>
        <begin position="131"/>
        <end position="134"/>
    </location>
</feature>
<feature type="strand" evidence="19">
    <location>
        <begin position="157"/>
        <end position="159"/>
    </location>
</feature>
<feature type="helix" evidence="19">
    <location>
        <begin position="160"/>
        <end position="192"/>
    </location>
</feature>
<feature type="strand" evidence="19">
    <location>
        <begin position="201"/>
        <end position="207"/>
    </location>
</feature>
<feature type="strand" evidence="19">
    <location>
        <begin position="213"/>
        <end position="215"/>
    </location>
</feature>
<feature type="turn" evidence="19">
    <location>
        <begin position="218"/>
        <end position="220"/>
    </location>
</feature>
<feature type="helix" evidence="19">
    <location>
        <begin position="221"/>
        <end position="228"/>
    </location>
</feature>
<feature type="strand" evidence="19">
    <location>
        <begin position="235"/>
        <end position="240"/>
    </location>
</feature>
<feature type="helix" evidence="19">
    <location>
        <begin position="242"/>
        <end position="260"/>
    </location>
</feature>
<feature type="turn" evidence="19">
    <location>
        <begin position="261"/>
        <end position="263"/>
    </location>
</feature>
<feature type="strand" evidence="19">
    <location>
        <begin position="264"/>
        <end position="269"/>
    </location>
</feature>
<feature type="strand" evidence="19">
    <location>
        <begin position="278"/>
        <end position="280"/>
    </location>
</feature>
<feature type="strand" evidence="19">
    <location>
        <begin position="284"/>
        <end position="287"/>
    </location>
</feature>
<feature type="helix" evidence="19">
    <location>
        <begin position="292"/>
        <end position="295"/>
    </location>
</feature>
<feature type="helix" evidence="19">
    <location>
        <begin position="297"/>
        <end position="315"/>
    </location>
</feature>
<feature type="strand" evidence="19">
    <location>
        <begin position="317"/>
        <end position="327"/>
    </location>
</feature>
<feature type="strand" evidence="19">
    <location>
        <begin position="329"/>
        <end position="333"/>
    </location>
</feature>
<feature type="helix" evidence="19">
    <location>
        <begin position="334"/>
        <end position="337"/>
    </location>
</feature>
<feature type="strand" evidence="19">
    <location>
        <begin position="338"/>
        <end position="340"/>
    </location>
</feature>
<feature type="strand" evidence="19">
    <location>
        <begin position="348"/>
        <end position="351"/>
    </location>
</feature>
<feature type="helix" evidence="19">
    <location>
        <begin position="362"/>
        <end position="364"/>
    </location>
</feature>
<feature type="strand" evidence="19">
    <location>
        <begin position="365"/>
        <end position="367"/>
    </location>
</feature>
<feature type="helix" evidence="19">
    <location>
        <begin position="369"/>
        <end position="401"/>
    </location>
</feature>
<feature type="turn" evidence="19">
    <location>
        <begin position="402"/>
        <end position="408"/>
    </location>
</feature>
<feature type="turn" evidence="19">
    <location>
        <begin position="416"/>
        <end position="418"/>
    </location>
</feature>
<feature type="helix" evidence="19">
    <location>
        <begin position="421"/>
        <end position="450"/>
    </location>
</feature>
<feature type="turn" evidence="19">
    <location>
        <begin position="451"/>
        <end position="454"/>
    </location>
</feature>
<feature type="helix" evidence="19">
    <location>
        <begin position="458"/>
        <end position="495"/>
    </location>
</feature>
<feature type="helix" evidence="19">
    <location>
        <begin position="502"/>
        <end position="532"/>
    </location>
</feature>
<feature type="helix" evidence="19">
    <location>
        <begin position="536"/>
        <end position="546"/>
    </location>
</feature>
<feature type="strand" evidence="19">
    <location>
        <begin position="553"/>
        <end position="555"/>
    </location>
</feature>
<feature type="helix" evidence="19">
    <location>
        <begin position="570"/>
        <end position="584"/>
    </location>
</feature>
<feature type="helix" evidence="19">
    <location>
        <begin position="592"/>
        <end position="611"/>
    </location>
</feature>
<feature type="turn" evidence="19">
    <location>
        <begin position="621"/>
        <end position="623"/>
    </location>
</feature>
<feature type="helix" evidence="19">
    <location>
        <begin position="624"/>
        <end position="649"/>
    </location>
</feature>
<feature type="helix" evidence="19">
    <location>
        <begin position="656"/>
        <end position="682"/>
    </location>
</feature>
<feature type="helix" evidence="19">
    <location>
        <begin position="686"/>
        <end position="693"/>
    </location>
</feature>
<feature type="strand" evidence="19">
    <location>
        <begin position="694"/>
        <end position="696"/>
    </location>
</feature>
<feature type="turn" evidence="19">
    <location>
        <begin position="697"/>
        <end position="699"/>
    </location>
</feature>
<feature type="strand" evidence="19">
    <location>
        <begin position="700"/>
        <end position="702"/>
    </location>
</feature>
<feature type="helix" evidence="19">
    <location>
        <begin position="705"/>
        <end position="710"/>
    </location>
</feature>
<gene>
    <name evidence="7" type="primary">OSCA1</name>
    <name evidence="7" type="synonym">OSCA1.1</name>
    <name evidence="10" type="ordered locus">At4g04340</name>
    <name evidence="11" type="ORF">T19B17.6</name>
</gene>